<protein>
    <recommendedName>
        <fullName>Ubiquitin-conjugating enzyme E2 C</fullName>
        <ecNumber>2.3.2.23</ecNumber>
    </recommendedName>
    <alternativeName>
        <fullName>(E3-independent) E2 ubiquitin-conjugating enzyme C</fullName>
        <ecNumber>2.3.2.24</ecNumber>
    </alternativeName>
    <alternativeName>
        <fullName>E2 ubiquitin-conjugating enzyme C</fullName>
    </alternativeName>
    <alternativeName>
        <fullName>Ubiquitin carrier protein C</fullName>
    </alternativeName>
    <alternativeName>
        <fullName>Ubiquitin-protein ligase C</fullName>
    </alternativeName>
</protein>
<organism>
    <name type="scientific">Macaca fascicularis</name>
    <name type="common">Crab-eating macaque</name>
    <name type="synonym">Cynomolgus monkey</name>
    <dbReference type="NCBI Taxonomy" id="9541"/>
    <lineage>
        <taxon>Eukaryota</taxon>
        <taxon>Metazoa</taxon>
        <taxon>Chordata</taxon>
        <taxon>Craniata</taxon>
        <taxon>Vertebrata</taxon>
        <taxon>Euteleostomi</taxon>
        <taxon>Mammalia</taxon>
        <taxon>Eutheria</taxon>
        <taxon>Euarchontoglires</taxon>
        <taxon>Primates</taxon>
        <taxon>Haplorrhini</taxon>
        <taxon>Catarrhini</taxon>
        <taxon>Cercopithecidae</taxon>
        <taxon>Cercopithecinae</taxon>
        <taxon>Macaca</taxon>
    </lineage>
</organism>
<proteinExistence type="evidence at transcript level"/>
<sequence length="179" mass="19668">MASQNRDPAATSVTAARKGAEPSGGAARGPVGKRLQQELMTLMMSGDKGISAFPESDNLFKWVGTIHGAAGTVYEDLRYKLSLEFPSGYPYNAPTVKFLTPCYHPNVDTQGNICLDILKDKWSALYDVRTILLSIQSLLGEPNIDSPLNTHAAELWKNPTAFKKYLQETYSKQVTSQEP</sequence>
<reference key="1">
    <citation type="submission" date="2005-06" db="EMBL/GenBank/DDBJ databases">
        <title>DNA sequences of macaque genes expressed in brain or testis and its evolutionary implications.</title>
        <authorList>
            <consortium name="International consortium for macaque cDNA sequencing and analysis"/>
        </authorList>
    </citation>
    <scope>NUCLEOTIDE SEQUENCE [LARGE SCALE MRNA]</scope>
    <source>
        <tissue>Testis</tissue>
    </source>
</reference>
<name>UBE2C_MACFA</name>
<gene>
    <name type="primary">UBE2C</name>
    <name type="synonym">UBCH10</name>
    <name type="ORF">QtsA-10272</name>
</gene>
<dbReference type="EC" id="2.3.2.23"/>
<dbReference type="EC" id="2.3.2.24"/>
<dbReference type="EMBL" id="AB168165">
    <property type="protein sequence ID" value="BAE00290.1"/>
    <property type="molecule type" value="mRNA"/>
</dbReference>
<dbReference type="RefSeq" id="NP_001270678.1">
    <property type="nucleotide sequence ID" value="NM_001283749.1"/>
</dbReference>
<dbReference type="RefSeq" id="XP_005540893.1">
    <property type="nucleotide sequence ID" value="XM_005540836.2"/>
</dbReference>
<dbReference type="RefSeq" id="XP_045218967.1">
    <property type="nucleotide sequence ID" value="XM_045363032.2"/>
</dbReference>
<dbReference type="SMR" id="Q4R9D1"/>
<dbReference type="STRING" id="9541.ENSMFAP00000013218"/>
<dbReference type="GeneID" id="101866586"/>
<dbReference type="KEGG" id="mcf:102145093"/>
<dbReference type="VEuPathDB" id="HostDB:ENSMFAG00000028239"/>
<dbReference type="VEuPathDB" id="HostDB:ENSMFAG00000028896"/>
<dbReference type="eggNOG" id="KOG0421">
    <property type="taxonomic scope" value="Eukaryota"/>
</dbReference>
<dbReference type="OMA" id="DTQGNTC"/>
<dbReference type="UniPathway" id="UPA00143"/>
<dbReference type="Proteomes" id="UP000233100">
    <property type="component" value="Chromosome 10"/>
</dbReference>
<dbReference type="GO" id="GO:0005680">
    <property type="term" value="C:anaphase-promoting complex"/>
    <property type="evidence" value="ECO:0000250"/>
    <property type="project" value="UniProtKB"/>
</dbReference>
<dbReference type="GO" id="GO:0005524">
    <property type="term" value="F:ATP binding"/>
    <property type="evidence" value="ECO:0007669"/>
    <property type="project" value="UniProtKB-KW"/>
</dbReference>
<dbReference type="GO" id="GO:0061631">
    <property type="term" value="F:ubiquitin conjugating enzyme activity"/>
    <property type="evidence" value="ECO:0007669"/>
    <property type="project" value="UniProtKB-EC"/>
</dbReference>
<dbReference type="GO" id="GO:0031145">
    <property type="term" value="P:anaphase-promoting complex-dependent catabolic process"/>
    <property type="evidence" value="ECO:0000250"/>
    <property type="project" value="UniProtKB"/>
</dbReference>
<dbReference type="GO" id="GO:0051301">
    <property type="term" value="P:cell division"/>
    <property type="evidence" value="ECO:0007669"/>
    <property type="project" value="UniProtKB-KW"/>
</dbReference>
<dbReference type="GO" id="GO:0010458">
    <property type="term" value="P:exit from mitosis"/>
    <property type="evidence" value="ECO:0000250"/>
    <property type="project" value="UniProtKB"/>
</dbReference>
<dbReference type="GO" id="GO:0010994">
    <property type="term" value="P:free ubiquitin chain polymerization"/>
    <property type="evidence" value="ECO:0000250"/>
    <property type="project" value="UniProtKB"/>
</dbReference>
<dbReference type="GO" id="GO:0070979">
    <property type="term" value="P:protein K11-linked ubiquitination"/>
    <property type="evidence" value="ECO:0000250"/>
    <property type="project" value="UniProtKB"/>
</dbReference>
<dbReference type="GO" id="GO:0070936">
    <property type="term" value="P:protein K48-linked ubiquitination"/>
    <property type="evidence" value="ECO:0000250"/>
    <property type="project" value="UniProtKB"/>
</dbReference>
<dbReference type="GO" id="GO:0006511">
    <property type="term" value="P:ubiquitin-dependent protein catabolic process"/>
    <property type="evidence" value="ECO:0000250"/>
    <property type="project" value="UniProtKB"/>
</dbReference>
<dbReference type="CDD" id="cd23791">
    <property type="entry name" value="UBCc_UBE2C"/>
    <property type="match status" value="1"/>
</dbReference>
<dbReference type="FunFam" id="3.10.110.10:FF:000039">
    <property type="entry name" value="Ubiquitin-conjugating enzyme E2 C"/>
    <property type="match status" value="1"/>
</dbReference>
<dbReference type="Gene3D" id="3.10.110.10">
    <property type="entry name" value="Ubiquitin Conjugating Enzyme"/>
    <property type="match status" value="1"/>
</dbReference>
<dbReference type="InterPro" id="IPR050113">
    <property type="entry name" value="Ub_conjugating_enzyme"/>
</dbReference>
<dbReference type="InterPro" id="IPR000608">
    <property type="entry name" value="UBQ-conjugat_E2_core"/>
</dbReference>
<dbReference type="InterPro" id="IPR023313">
    <property type="entry name" value="UBQ-conjugating_AS"/>
</dbReference>
<dbReference type="InterPro" id="IPR016135">
    <property type="entry name" value="UBQ-conjugating_enzyme/RWD"/>
</dbReference>
<dbReference type="PANTHER" id="PTHR24067">
    <property type="entry name" value="UBIQUITIN-CONJUGATING ENZYME E2"/>
    <property type="match status" value="1"/>
</dbReference>
<dbReference type="Pfam" id="PF00179">
    <property type="entry name" value="UQ_con"/>
    <property type="match status" value="1"/>
</dbReference>
<dbReference type="SMART" id="SM00212">
    <property type="entry name" value="UBCc"/>
    <property type="match status" value="1"/>
</dbReference>
<dbReference type="SUPFAM" id="SSF54495">
    <property type="entry name" value="UBC-like"/>
    <property type="match status" value="1"/>
</dbReference>
<dbReference type="PROSITE" id="PS00183">
    <property type="entry name" value="UBC_1"/>
    <property type="match status" value="1"/>
</dbReference>
<dbReference type="PROSITE" id="PS50127">
    <property type="entry name" value="UBC_2"/>
    <property type="match status" value="1"/>
</dbReference>
<keyword id="KW-0007">Acetylation</keyword>
<keyword id="KW-0067">ATP-binding</keyword>
<keyword id="KW-0131">Cell cycle</keyword>
<keyword id="KW-0132">Cell division</keyword>
<keyword id="KW-0498">Mitosis</keyword>
<keyword id="KW-0547">Nucleotide-binding</keyword>
<keyword id="KW-0597">Phosphoprotein</keyword>
<keyword id="KW-1185">Reference proteome</keyword>
<keyword id="KW-0808">Transferase</keyword>
<keyword id="KW-0832">Ubl conjugation</keyword>
<keyword id="KW-0833">Ubl conjugation pathway</keyword>
<feature type="initiator methionine" description="Removed" evidence="1">
    <location>
        <position position="1"/>
    </location>
</feature>
<feature type="chain" id="PRO_0000281857" description="Ubiquitin-conjugating enzyme E2 C">
    <location>
        <begin position="2"/>
        <end position="179"/>
    </location>
</feature>
<feature type="domain" description="UBC core" evidence="2">
    <location>
        <begin position="30"/>
        <end position="175"/>
    </location>
</feature>
<feature type="region of interest" description="Disordered" evidence="4">
    <location>
        <begin position="1"/>
        <end position="31"/>
    </location>
</feature>
<feature type="compositionally biased region" description="Polar residues" evidence="4">
    <location>
        <begin position="1"/>
        <end position="14"/>
    </location>
</feature>
<feature type="active site" description="Glycyl thioester intermediate" evidence="2 3">
    <location>
        <position position="114"/>
    </location>
</feature>
<feature type="modified residue" description="N-acetylalanine" evidence="1">
    <location>
        <position position="2"/>
    </location>
</feature>
<feature type="modified residue" description="Phosphoserine" evidence="1">
    <location>
        <position position="3"/>
    </location>
</feature>
<comment type="function">
    <text evidence="1">Accepts ubiquitin from the E1 complex and catalyzes its covalent attachment to other proteins. In vitro catalyzes 'Lys-11'- and 'Lys-48'-linked polyubiquitination. Acts as an essential factor of the anaphase promoting complex/cyclosome (APC/C), a cell cycle-regulated ubiquitin ligase that controls progression through mitosis. Acts by initiating 'Lys-11'-linked polyubiquitin chains on APC/C substrates, leading to the degradation of APC/C substrates by the proteasome and promoting mitotic exit.</text>
</comment>
<comment type="catalytic activity">
    <reaction evidence="1 2 3">
        <text>S-ubiquitinyl-[E1 ubiquitin-activating enzyme]-L-cysteine + [E2 ubiquitin-conjugating enzyme]-L-cysteine = [E1 ubiquitin-activating enzyme]-L-cysteine + S-ubiquitinyl-[E2 ubiquitin-conjugating enzyme]-L-cysteine.</text>
        <dbReference type="EC" id="2.3.2.23"/>
    </reaction>
</comment>
<comment type="catalytic activity">
    <reaction evidence="1">
        <text>S-ubiquitinyl-[E1 ubiquitin-activating enzyme]-L-cysteine + [acceptor protein]-L-lysine = [E1 ubiquitin-activating enzyme]-L-cysteine + N(6)-monoubiquitinyl-[acceptor protein]-L-lysine.</text>
        <dbReference type="EC" id="2.3.2.24"/>
    </reaction>
</comment>
<comment type="pathway">
    <text evidence="2">Protein modification; protein ubiquitination.</text>
</comment>
<comment type="subunit">
    <text evidence="1">Component of the APC/C complex, composed of at least 14 distinct subunits that assemble into a complex of at least 19 chains with a combined molecular mass of around 1.2 MDa. Within this complex, directly interacts with ANAPC2.</text>
</comment>
<comment type="PTM">
    <text evidence="1">Autoubiquitinated by the APC/C complex, leading to its degradation by the proteasome. Its degradation plays a central role in APC/C regulation, allowing cyclin-A accumulation before S phase entry. APC/C substrates inhibit the autoubiquitination of UBE2C/UBCH10 but not its E2 function, hence APC/C remaining active until its substrates have been destroyed.</text>
</comment>
<comment type="similarity">
    <text evidence="2">Belongs to the ubiquitin-conjugating enzyme family.</text>
</comment>
<evidence type="ECO:0000250" key="1">
    <source>
        <dbReference type="UniProtKB" id="O00762"/>
    </source>
</evidence>
<evidence type="ECO:0000255" key="2">
    <source>
        <dbReference type="PROSITE-ProRule" id="PRU00388"/>
    </source>
</evidence>
<evidence type="ECO:0000255" key="3">
    <source>
        <dbReference type="PROSITE-ProRule" id="PRU10133"/>
    </source>
</evidence>
<evidence type="ECO:0000256" key="4">
    <source>
        <dbReference type="SAM" id="MobiDB-lite"/>
    </source>
</evidence>
<accession>Q4R9D1</accession>